<organism>
    <name type="scientific">Synechococcus sp. (strain JA-2-3B'a(2-13))</name>
    <name type="common">Cyanobacteria bacterium Yellowstone B-Prime</name>
    <dbReference type="NCBI Taxonomy" id="321332"/>
    <lineage>
        <taxon>Bacteria</taxon>
        <taxon>Bacillati</taxon>
        <taxon>Cyanobacteriota</taxon>
        <taxon>Cyanophyceae</taxon>
        <taxon>Synechococcales</taxon>
        <taxon>Synechococcaceae</taxon>
        <taxon>Synechococcus</taxon>
    </lineage>
</organism>
<dbReference type="EC" id="4.1.1.37" evidence="1"/>
<dbReference type="EMBL" id="CP000240">
    <property type="protein sequence ID" value="ABD02816.1"/>
    <property type="molecule type" value="Genomic_DNA"/>
</dbReference>
<dbReference type="SMR" id="Q2JKH3"/>
<dbReference type="STRING" id="321332.CYB_1861"/>
<dbReference type="KEGG" id="cyb:CYB_1861"/>
<dbReference type="eggNOG" id="COG0407">
    <property type="taxonomic scope" value="Bacteria"/>
</dbReference>
<dbReference type="HOGENOM" id="CLU_040933_0_2_3"/>
<dbReference type="OrthoDB" id="9806656at2"/>
<dbReference type="UniPathway" id="UPA00251">
    <property type="reaction ID" value="UER00321"/>
</dbReference>
<dbReference type="Proteomes" id="UP000001938">
    <property type="component" value="Chromosome"/>
</dbReference>
<dbReference type="GO" id="GO:0005737">
    <property type="term" value="C:cytoplasm"/>
    <property type="evidence" value="ECO:0007669"/>
    <property type="project" value="UniProtKB-SubCell"/>
</dbReference>
<dbReference type="GO" id="GO:0004853">
    <property type="term" value="F:uroporphyrinogen decarboxylase activity"/>
    <property type="evidence" value="ECO:0007669"/>
    <property type="project" value="UniProtKB-UniRule"/>
</dbReference>
<dbReference type="GO" id="GO:0006782">
    <property type="term" value="P:protoporphyrinogen IX biosynthetic process"/>
    <property type="evidence" value="ECO:0007669"/>
    <property type="project" value="UniProtKB-UniRule"/>
</dbReference>
<dbReference type="CDD" id="cd00717">
    <property type="entry name" value="URO-D"/>
    <property type="match status" value="1"/>
</dbReference>
<dbReference type="FunFam" id="3.20.20.210:FF:000006">
    <property type="entry name" value="Uroporphyrinogen decarboxylase"/>
    <property type="match status" value="1"/>
</dbReference>
<dbReference type="Gene3D" id="3.20.20.210">
    <property type="match status" value="1"/>
</dbReference>
<dbReference type="HAMAP" id="MF_00218">
    <property type="entry name" value="URO_D"/>
    <property type="match status" value="1"/>
</dbReference>
<dbReference type="InterPro" id="IPR038071">
    <property type="entry name" value="UROD/MetE-like_sf"/>
</dbReference>
<dbReference type="InterPro" id="IPR006361">
    <property type="entry name" value="Uroporphyrinogen_deCO2ase_HemE"/>
</dbReference>
<dbReference type="InterPro" id="IPR000257">
    <property type="entry name" value="Uroporphyrinogen_deCOase"/>
</dbReference>
<dbReference type="NCBIfam" id="TIGR01464">
    <property type="entry name" value="hemE"/>
    <property type="match status" value="1"/>
</dbReference>
<dbReference type="PANTHER" id="PTHR21091">
    <property type="entry name" value="METHYLTETRAHYDROFOLATE:HOMOCYSTEINE METHYLTRANSFERASE RELATED"/>
    <property type="match status" value="1"/>
</dbReference>
<dbReference type="PANTHER" id="PTHR21091:SF169">
    <property type="entry name" value="UROPORPHYRINOGEN DECARBOXYLASE"/>
    <property type="match status" value="1"/>
</dbReference>
<dbReference type="Pfam" id="PF01208">
    <property type="entry name" value="URO-D"/>
    <property type="match status" value="1"/>
</dbReference>
<dbReference type="SUPFAM" id="SSF51726">
    <property type="entry name" value="UROD/MetE-like"/>
    <property type="match status" value="1"/>
</dbReference>
<dbReference type="PROSITE" id="PS00906">
    <property type="entry name" value="UROD_1"/>
    <property type="match status" value="1"/>
</dbReference>
<dbReference type="PROSITE" id="PS00907">
    <property type="entry name" value="UROD_2"/>
    <property type="match status" value="1"/>
</dbReference>
<proteinExistence type="inferred from homology"/>
<reference key="1">
    <citation type="journal article" date="2007" name="ISME J.">
        <title>Population level functional diversity in a microbial community revealed by comparative genomic and metagenomic analyses.</title>
        <authorList>
            <person name="Bhaya D."/>
            <person name="Grossman A.R."/>
            <person name="Steunou A.-S."/>
            <person name="Khuri N."/>
            <person name="Cohan F.M."/>
            <person name="Hamamura N."/>
            <person name="Melendrez M.C."/>
            <person name="Bateson M.M."/>
            <person name="Ward D.M."/>
            <person name="Heidelberg J.F."/>
        </authorList>
    </citation>
    <scope>NUCLEOTIDE SEQUENCE [LARGE SCALE GENOMIC DNA]</scope>
    <source>
        <strain>JA-2-3B'a(2-13)</strain>
    </source>
</reference>
<protein>
    <recommendedName>
        <fullName evidence="1">Uroporphyrinogen decarboxylase</fullName>
        <shortName evidence="1">UPD</shortName>
        <shortName evidence="1">URO-D</shortName>
        <ecNumber evidence="1">4.1.1.37</ecNumber>
    </recommendedName>
</protein>
<gene>
    <name evidence="1" type="primary">hemE</name>
    <name type="ordered locus">CYB_1861</name>
</gene>
<feature type="chain" id="PRO_0000325701" description="Uroporphyrinogen decarboxylase">
    <location>
        <begin position="1"/>
        <end position="346"/>
    </location>
</feature>
<feature type="binding site" evidence="1">
    <location>
        <begin position="23"/>
        <end position="27"/>
    </location>
    <ligand>
        <name>substrate</name>
    </ligand>
</feature>
<feature type="binding site" evidence="1">
    <location>
        <position position="72"/>
    </location>
    <ligand>
        <name>substrate</name>
    </ligand>
</feature>
<feature type="binding site" evidence="1">
    <location>
        <position position="149"/>
    </location>
    <ligand>
        <name>substrate</name>
    </ligand>
</feature>
<feature type="binding site" evidence="1">
    <location>
        <position position="204"/>
    </location>
    <ligand>
        <name>substrate</name>
    </ligand>
</feature>
<feature type="binding site" evidence="1">
    <location>
        <position position="318"/>
    </location>
    <ligand>
        <name>substrate</name>
    </ligand>
</feature>
<feature type="site" description="Transition state stabilizer" evidence="1">
    <location>
        <position position="72"/>
    </location>
</feature>
<evidence type="ECO:0000255" key="1">
    <source>
        <dbReference type="HAMAP-Rule" id="MF_00218"/>
    </source>
</evidence>
<keyword id="KW-0963">Cytoplasm</keyword>
<keyword id="KW-0210">Decarboxylase</keyword>
<keyword id="KW-0456">Lyase</keyword>
<keyword id="KW-0627">Porphyrin biosynthesis</keyword>
<keyword id="KW-1185">Reference proteome</keyword>
<accession>Q2JKH3</accession>
<sequence length="346" mass="38903">MGDRLLRAARGEVLDRPPVWMMRQAGRYMAAYRELQSKYTFKQRCEIPELAVEISLQPFRAFAPDGVILFSDILTPLEGMGIPFELVEHQGPIIDPPIRSQAQIERIRLLEPEESLPFIKTILSTLRREVEGKATLLGFVGSPWTLACYAVEGRSSKDYAHIKSLAFAQPPLLHQLLSKLADSIARYVIYQIEGGAQVVQLFDTWAGQLSPVDYECWALPYQKQIVDQVKARYPQVPLILYINGSAALLERVGKAGIDVFSLDWMSDMAEARARLGSLAVQGNLDPMVLLGSPEFIRQRTLEVIRKAGSRGHIMNLGHGIHPSTPEANVHYFFETVRQSAELIHLR</sequence>
<name>DCUP_SYNJB</name>
<comment type="function">
    <text evidence="1">Catalyzes the decarboxylation of four acetate groups of uroporphyrinogen-III to yield coproporphyrinogen-III.</text>
</comment>
<comment type="catalytic activity">
    <reaction evidence="1">
        <text>uroporphyrinogen III + 4 H(+) = coproporphyrinogen III + 4 CO2</text>
        <dbReference type="Rhea" id="RHEA:19865"/>
        <dbReference type="ChEBI" id="CHEBI:15378"/>
        <dbReference type="ChEBI" id="CHEBI:16526"/>
        <dbReference type="ChEBI" id="CHEBI:57308"/>
        <dbReference type="ChEBI" id="CHEBI:57309"/>
        <dbReference type="EC" id="4.1.1.37"/>
    </reaction>
</comment>
<comment type="pathway">
    <text evidence="1">Porphyrin-containing compound metabolism; protoporphyrin-IX biosynthesis; coproporphyrinogen-III from 5-aminolevulinate: step 4/4.</text>
</comment>
<comment type="subunit">
    <text evidence="1">Homodimer.</text>
</comment>
<comment type="subcellular location">
    <subcellularLocation>
        <location evidence="1">Cytoplasm</location>
    </subcellularLocation>
</comment>
<comment type="similarity">
    <text evidence="1">Belongs to the uroporphyrinogen decarboxylase family.</text>
</comment>